<evidence type="ECO:0000255" key="1">
    <source>
        <dbReference type="HAMAP-Rule" id="MF_01333"/>
    </source>
</evidence>
<evidence type="ECO:0000305" key="2"/>
<name>RL5_STRP3</name>
<proteinExistence type="inferred from homology"/>
<reference key="1">
    <citation type="journal article" date="2002" name="Proc. Natl. Acad. Sci. U.S.A.">
        <title>Genome sequence of a serotype M3 strain of group A Streptococcus: phage-encoded toxins, the high-virulence phenotype, and clone emergence.</title>
        <authorList>
            <person name="Beres S.B."/>
            <person name="Sylva G.L."/>
            <person name="Barbian K.D."/>
            <person name="Lei B."/>
            <person name="Hoff J.S."/>
            <person name="Mammarella N.D."/>
            <person name="Liu M.-Y."/>
            <person name="Smoot J.C."/>
            <person name="Porcella S.F."/>
            <person name="Parkins L.D."/>
            <person name="Campbell D.S."/>
            <person name="Smith T.M."/>
            <person name="McCormick J.K."/>
            <person name="Leung D.Y.M."/>
            <person name="Schlievert P.M."/>
            <person name="Musser J.M."/>
        </authorList>
    </citation>
    <scope>NUCLEOTIDE SEQUENCE [LARGE SCALE GENOMIC DNA]</scope>
    <source>
        <strain>ATCC BAA-595 / MGAS315</strain>
    </source>
</reference>
<accession>P0DE56</accession>
<accession>Q79YR4</accession>
<accession>Q7CFK8</accession>
<feature type="chain" id="PRO_0000125004" description="Large ribosomal subunit protein uL5">
    <location>
        <begin position="1"/>
        <end position="180"/>
    </location>
</feature>
<comment type="function">
    <text evidence="1">This is one of the proteins that bind and probably mediate the attachment of the 5S RNA into the large ribosomal subunit, where it forms part of the central protuberance. In the 70S ribosome it contacts protein S13 of the 30S subunit (bridge B1b), connecting the 2 subunits; this bridge is implicated in subunit movement. Contacts the P site tRNA; the 5S rRNA and some of its associated proteins might help stabilize positioning of ribosome-bound tRNAs.</text>
</comment>
<comment type="subunit">
    <text evidence="1">Part of the 50S ribosomal subunit; part of the 5S rRNA/L5/L18/L25 subcomplex. Contacts the 5S rRNA and the P site tRNA. Forms a bridge to the 30S subunit in the 70S ribosome.</text>
</comment>
<comment type="similarity">
    <text evidence="1">Belongs to the universal ribosomal protein uL5 family.</text>
</comment>
<organism>
    <name type="scientific">Streptococcus pyogenes serotype M3 (strain ATCC BAA-595 / MGAS315)</name>
    <dbReference type="NCBI Taxonomy" id="198466"/>
    <lineage>
        <taxon>Bacteria</taxon>
        <taxon>Bacillati</taxon>
        <taxon>Bacillota</taxon>
        <taxon>Bacilli</taxon>
        <taxon>Lactobacillales</taxon>
        <taxon>Streptococcaceae</taxon>
        <taxon>Streptococcus</taxon>
    </lineage>
</organism>
<gene>
    <name evidence="1" type="primary">rplE</name>
    <name type="ordered locus">SpyM3_0052</name>
</gene>
<sequence>MANRLKEKYTNEVIPALTEKFNYTSVMAVPKVEKIVLNMGVGDAVSNAKNLEKAAAELALISGQKPLITKAKKSIAGFRLREGVAIGAKVTLRGERMYEFLDKLVSVSLPRVRDFHGVPTKSFDGRGNYTLGVKEQLIFPEISFDDVDKVRGLDIVIVTTANTDEESRELLKGLGMPFAK</sequence>
<dbReference type="EMBL" id="AE014074">
    <property type="protein sequence ID" value="AAM78659.1"/>
    <property type="molecule type" value="Genomic_DNA"/>
</dbReference>
<dbReference type="RefSeq" id="WP_002986634.1">
    <property type="nucleotide sequence ID" value="NC_004070.1"/>
</dbReference>
<dbReference type="SMR" id="P0DE56"/>
<dbReference type="GeneID" id="69900038"/>
<dbReference type="KEGG" id="spg:SpyM3_0052"/>
<dbReference type="HOGENOM" id="CLU_061015_2_1_9"/>
<dbReference type="Proteomes" id="UP000000564">
    <property type="component" value="Chromosome"/>
</dbReference>
<dbReference type="GO" id="GO:1990904">
    <property type="term" value="C:ribonucleoprotein complex"/>
    <property type="evidence" value="ECO:0007669"/>
    <property type="project" value="UniProtKB-KW"/>
</dbReference>
<dbReference type="GO" id="GO:0005840">
    <property type="term" value="C:ribosome"/>
    <property type="evidence" value="ECO:0007669"/>
    <property type="project" value="UniProtKB-KW"/>
</dbReference>
<dbReference type="GO" id="GO:0019843">
    <property type="term" value="F:rRNA binding"/>
    <property type="evidence" value="ECO:0007669"/>
    <property type="project" value="UniProtKB-UniRule"/>
</dbReference>
<dbReference type="GO" id="GO:0003735">
    <property type="term" value="F:structural constituent of ribosome"/>
    <property type="evidence" value="ECO:0007669"/>
    <property type="project" value="InterPro"/>
</dbReference>
<dbReference type="GO" id="GO:0000049">
    <property type="term" value="F:tRNA binding"/>
    <property type="evidence" value="ECO:0007669"/>
    <property type="project" value="UniProtKB-UniRule"/>
</dbReference>
<dbReference type="GO" id="GO:0006412">
    <property type="term" value="P:translation"/>
    <property type="evidence" value="ECO:0007669"/>
    <property type="project" value="UniProtKB-UniRule"/>
</dbReference>
<dbReference type="FunFam" id="3.30.1440.10:FF:000001">
    <property type="entry name" value="50S ribosomal protein L5"/>
    <property type="match status" value="1"/>
</dbReference>
<dbReference type="Gene3D" id="3.30.1440.10">
    <property type="match status" value="1"/>
</dbReference>
<dbReference type="HAMAP" id="MF_01333_B">
    <property type="entry name" value="Ribosomal_uL5_B"/>
    <property type="match status" value="1"/>
</dbReference>
<dbReference type="InterPro" id="IPR002132">
    <property type="entry name" value="Ribosomal_uL5"/>
</dbReference>
<dbReference type="InterPro" id="IPR020930">
    <property type="entry name" value="Ribosomal_uL5_bac-type"/>
</dbReference>
<dbReference type="InterPro" id="IPR031309">
    <property type="entry name" value="Ribosomal_uL5_C"/>
</dbReference>
<dbReference type="InterPro" id="IPR020929">
    <property type="entry name" value="Ribosomal_uL5_CS"/>
</dbReference>
<dbReference type="InterPro" id="IPR022803">
    <property type="entry name" value="Ribosomal_uL5_dom_sf"/>
</dbReference>
<dbReference type="InterPro" id="IPR031310">
    <property type="entry name" value="Ribosomal_uL5_N"/>
</dbReference>
<dbReference type="NCBIfam" id="NF000585">
    <property type="entry name" value="PRK00010.1"/>
    <property type="match status" value="1"/>
</dbReference>
<dbReference type="PANTHER" id="PTHR11994">
    <property type="entry name" value="60S RIBOSOMAL PROTEIN L11-RELATED"/>
    <property type="match status" value="1"/>
</dbReference>
<dbReference type="Pfam" id="PF00281">
    <property type="entry name" value="Ribosomal_L5"/>
    <property type="match status" value="1"/>
</dbReference>
<dbReference type="Pfam" id="PF00673">
    <property type="entry name" value="Ribosomal_L5_C"/>
    <property type="match status" value="1"/>
</dbReference>
<dbReference type="PIRSF" id="PIRSF002161">
    <property type="entry name" value="Ribosomal_L5"/>
    <property type="match status" value="1"/>
</dbReference>
<dbReference type="SUPFAM" id="SSF55282">
    <property type="entry name" value="RL5-like"/>
    <property type="match status" value="1"/>
</dbReference>
<dbReference type="PROSITE" id="PS00358">
    <property type="entry name" value="RIBOSOMAL_L5"/>
    <property type="match status" value="1"/>
</dbReference>
<keyword id="KW-0687">Ribonucleoprotein</keyword>
<keyword id="KW-0689">Ribosomal protein</keyword>
<keyword id="KW-0694">RNA-binding</keyword>
<keyword id="KW-0699">rRNA-binding</keyword>
<keyword id="KW-0820">tRNA-binding</keyword>
<protein>
    <recommendedName>
        <fullName evidence="1">Large ribosomal subunit protein uL5</fullName>
    </recommendedName>
    <alternativeName>
        <fullName evidence="2">50S ribosomal protein L5</fullName>
    </alternativeName>
</protein>